<proteinExistence type="inferred from homology"/>
<evidence type="ECO:0000255" key="1">
    <source>
        <dbReference type="HAMAP-Rule" id="MF_00821"/>
    </source>
</evidence>
<evidence type="ECO:0000305" key="2"/>
<sequence>MPDENKQPLFQIQRVYLKGLSLEQPNSPAIFLEEQSPTLEVAVSTIAEQQADGIFESTVTVSVTAKIRDKVAFLVEAKQSGIFEIRHLPAEQLNPALGIGCPTILYPYLRANIADAITRAGFPPVHLSEINFQAFYLQQQKNKMATQPGQTAEEPAMALEQE</sequence>
<keyword id="KW-0143">Chaperone</keyword>
<keyword id="KW-0963">Cytoplasm</keyword>
<keyword id="KW-0653">Protein transport</keyword>
<keyword id="KW-1185">Reference proteome</keyword>
<keyword id="KW-0811">Translocation</keyword>
<keyword id="KW-0813">Transport</keyword>
<feature type="chain" id="PRO_0000318255" description="Protein-export protein SecB 2">
    <location>
        <begin position="1"/>
        <end position="162"/>
    </location>
</feature>
<gene>
    <name evidence="1" type="primary">secB2</name>
    <name type="ordered locus">Pnap_0940</name>
</gene>
<comment type="function">
    <text evidence="1">One of the proteins required for the normal export of preproteins out of the cell cytoplasm. It is a molecular chaperone that binds to a subset of precursor proteins, maintaining them in a translocation-competent state. It also specifically binds to its receptor SecA.</text>
</comment>
<comment type="subunit">
    <text evidence="1">Homotetramer, a dimer of dimers. One homotetramer interacts with 1 SecA dimer.</text>
</comment>
<comment type="subcellular location">
    <subcellularLocation>
        <location evidence="1">Cytoplasm</location>
    </subcellularLocation>
</comment>
<comment type="similarity">
    <text evidence="1">Belongs to the SecB family.</text>
</comment>
<comment type="sequence caution" evidence="2">
    <conflict type="erroneous initiation">
        <sequence resource="EMBL-CDS" id="ABM36257"/>
    </conflict>
</comment>
<name>SECB2_POLNA</name>
<dbReference type="EMBL" id="CP000529">
    <property type="protein sequence ID" value="ABM36257.1"/>
    <property type="status" value="ALT_INIT"/>
    <property type="molecule type" value="Genomic_DNA"/>
</dbReference>
<dbReference type="RefSeq" id="WP_041376525.1">
    <property type="nucleotide sequence ID" value="NC_008781.1"/>
</dbReference>
<dbReference type="SMR" id="A1VKS9"/>
<dbReference type="STRING" id="365044.Pnap_0940"/>
<dbReference type="KEGG" id="pna:Pnap_0940"/>
<dbReference type="eggNOG" id="COG1952">
    <property type="taxonomic scope" value="Bacteria"/>
</dbReference>
<dbReference type="HOGENOM" id="CLU_111574_1_0_4"/>
<dbReference type="OrthoDB" id="9795145at2"/>
<dbReference type="Proteomes" id="UP000000644">
    <property type="component" value="Chromosome"/>
</dbReference>
<dbReference type="GO" id="GO:0005737">
    <property type="term" value="C:cytoplasm"/>
    <property type="evidence" value="ECO:0007669"/>
    <property type="project" value="UniProtKB-SubCell"/>
</dbReference>
<dbReference type="GO" id="GO:0051082">
    <property type="term" value="F:unfolded protein binding"/>
    <property type="evidence" value="ECO:0007669"/>
    <property type="project" value="InterPro"/>
</dbReference>
<dbReference type="GO" id="GO:0006457">
    <property type="term" value="P:protein folding"/>
    <property type="evidence" value="ECO:0007669"/>
    <property type="project" value="UniProtKB-UniRule"/>
</dbReference>
<dbReference type="GO" id="GO:0051262">
    <property type="term" value="P:protein tetramerization"/>
    <property type="evidence" value="ECO:0007669"/>
    <property type="project" value="InterPro"/>
</dbReference>
<dbReference type="GO" id="GO:0015031">
    <property type="term" value="P:protein transport"/>
    <property type="evidence" value="ECO:0007669"/>
    <property type="project" value="UniProtKB-UniRule"/>
</dbReference>
<dbReference type="Gene3D" id="3.10.420.10">
    <property type="entry name" value="SecB-like"/>
    <property type="match status" value="1"/>
</dbReference>
<dbReference type="HAMAP" id="MF_00821">
    <property type="entry name" value="SecB"/>
    <property type="match status" value="1"/>
</dbReference>
<dbReference type="InterPro" id="IPR003708">
    <property type="entry name" value="SecB"/>
</dbReference>
<dbReference type="InterPro" id="IPR035958">
    <property type="entry name" value="SecB-like_sf"/>
</dbReference>
<dbReference type="NCBIfam" id="NF004394">
    <property type="entry name" value="PRK05751.1-5"/>
    <property type="match status" value="1"/>
</dbReference>
<dbReference type="NCBIfam" id="TIGR00809">
    <property type="entry name" value="secB"/>
    <property type="match status" value="1"/>
</dbReference>
<dbReference type="PANTHER" id="PTHR36918">
    <property type="match status" value="1"/>
</dbReference>
<dbReference type="PANTHER" id="PTHR36918:SF1">
    <property type="entry name" value="PROTEIN-EXPORT PROTEIN SECB"/>
    <property type="match status" value="1"/>
</dbReference>
<dbReference type="Pfam" id="PF02556">
    <property type="entry name" value="SecB"/>
    <property type="match status" value="1"/>
</dbReference>
<dbReference type="PRINTS" id="PR01594">
    <property type="entry name" value="SECBCHAPRONE"/>
</dbReference>
<dbReference type="SUPFAM" id="SSF54611">
    <property type="entry name" value="SecB-like"/>
    <property type="match status" value="1"/>
</dbReference>
<organism>
    <name type="scientific">Polaromonas naphthalenivorans (strain CJ2)</name>
    <dbReference type="NCBI Taxonomy" id="365044"/>
    <lineage>
        <taxon>Bacteria</taxon>
        <taxon>Pseudomonadati</taxon>
        <taxon>Pseudomonadota</taxon>
        <taxon>Betaproteobacteria</taxon>
        <taxon>Burkholderiales</taxon>
        <taxon>Comamonadaceae</taxon>
        <taxon>Polaromonas</taxon>
    </lineage>
</organism>
<accession>A1VKS9</accession>
<protein>
    <recommendedName>
        <fullName evidence="1">Protein-export protein SecB 2</fullName>
    </recommendedName>
</protein>
<reference key="1">
    <citation type="journal article" date="2009" name="Environ. Microbiol.">
        <title>The genome of Polaromonas naphthalenivorans strain CJ2, isolated from coal tar-contaminated sediment, reveals physiological and metabolic versatility and evolution through extensive horizontal gene transfer.</title>
        <authorList>
            <person name="Yagi J.M."/>
            <person name="Sims D."/>
            <person name="Brettin T."/>
            <person name="Bruce D."/>
            <person name="Madsen E.L."/>
        </authorList>
    </citation>
    <scope>NUCLEOTIDE SEQUENCE [LARGE SCALE GENOMIC DNA]</scope>
    <source>
        <strain>CJ2</strain>
    </source>
</reference>